<evidence type="ECO:0000250" key="1"/>
<evidence type="ECO:0000255" key="2"/>
<organismHost>
    <name type="scientific">Bos taurus</name>
    <name type="common">Bovine</name>
    <dbReference type="NCBI Taxonomy" id="9913"/>
</organismHost>
<proteinExistence type="evidence at protein level"/>
<gene>
    <name type="primary">env</name>
</gene>
<reference key="1">
    <citation type="journal article" date="1984" name="Virology">
        <title>The nucleotide sequence of the env gene and post-env region of bovine leukemia virus.</title>
        <authorList>
            <person name="Rice N.R."/>
            <person name="Stephens R.M."/>
            <person name="Couez D."/>
            <person name="Deschamps J."/>
            <person name="Kettmann R."/>
            <person name="Burny A."/>
            <person name="Gilden R.V."/>
        </authorList>
    </citation>
    <scope>NUCLEOTIDE SEQUENCE [GENOMIC RNA]</scope>
</reference>
<reference key="2">
    <citation type="journal article" date="2000" name="J. Virol.">
        <title>The SU and TM envelope protein subunits of bovine leukemia virus are linked by disulfide bonds, both in cells and in virions.</title>
        <authorList>
            <person name="Johnston E.R."/>
            <person name="Radke K."/>
        </authorList>
    </citation>
    <scope>INTERCHAIN DISULFIDE BOND</scope>
</reference>
<name>ENV_BLV</name>
<keyword id="KW-0002">3D-structure</keyword>
<keyword id="KW-0165">Cleavage on pair of basic residues</keyword>
<keyword id="KW-0175">Coiled coil</keyword>
<keyword id="KW-1015">Disulfide bond</keyword>
<keyword id="KW-1169">Fusion of virus membrane with host cell membrane</keyword>
<keyword id="KW-1168">Fusion of virus membrane with host membrane</keyword>
<keyword id="KW-0325">Glycoprotein</keyword>
<keyword id="KW-1032">Host cell membrane</keyword>
<keyword id="KW-1043">Host membrane</keyword>
<keyword id="KW-0945">Host-virus interaction</keyword>
<keyword id="KW-0449">Lipoprotein</keyword>
<keyword id="KW-0472">Membrane</keyword>
<keyword id="KW-0564">Palmitate</keyword>
<keyword id="KW-0732">Signal</keyword>
<keyword id="KW-0812">Transmembrane</keyword>
<keyword id="KW-1133">Transmembrane helix</keyword>
<keyword id="KW-1161">Viral attachment to host cell</keyword>
<keyword id="KW-0261">Viral envelope protein</keyword>
<keyword id="KW-1162">Viral penetration into host cytoplasm</keyword>
<keyword id="KW-0946">Virion</keyword>
<keyword id="KW-1160">Virus entry into host cell</keyword>
<organism>
    <name type="scientific">Bovine leukemia virus</name>
    <name type="common">BLV</name>
    <dbReference type="NCBI Taxonomy" id="11901"/>
    <lineage>
        <taxon>Viruses</taxon>
        <taxon>Riboviria</taxon>
        <taxon>Pararnavirae</taxon>
        <taxon>Artverviricota</taxon>
        <taxon>Revtraviricetes</taxon>
        <taxon>Ortervirales</taxon>
        <taxon>Retroviridae</taxon>
        <taxon>Orthoretrovirinae</taxon>
        <taxon>Deltaretrovirus</taxon>
    </lineage>
</organism>
<accession>P51519</accession>
<accession>Q85488</accession>
<accession>Q85489</accession>
<sequence>MPKERRSRRRPQPIIRWVSLTLTLLALCQPIQTWRCSLSLGNQQWMTTYNQEAKFSISIDQILEAHNQSPFCPRSPRYTLDFVNGYPKIYWPPPQGRRRFGARAMVTYDCEPRCPYVGADHFDCPHWDNASQADQGSFYVNHQILFLHLKQCHGIFTLTWEIWGYDPLITFSLHKIPDPPQPDFPQLNSDWVPSVRSWALLLNQTARAFPDCAICWEPSPPWAPEILVYNKTISGSGPGLALPDAQIFWVNTSLFNTTQGWHHPSQRLLFNVSQGNALLLPPISLVNLSTVSSAPPTRVRRSPVAALTLGLALSVGLTGINVAVSALSHQRLTSLIHVLEQDQQRLITAINQTHYNLLNVASVVAQNRRGLDWLYIRLGFQSLCPTINEPCCFLRIQNDSIIRLGDLQPLSQRVSTDWQWPWNWDLGLTAWVRETIHSVLSLFLLALFLLFLAPCLIKCLTSRLLKLLRQAPHFPEISFPPKPDSDYQALLPSAPEIYSHLSPTKPDYINLRPCP</sequence>
<comment type="function">
    <text evidence="1">The surface protein (SU) attaches the virus to the host cell by binding to its receptor. This interaction triggers the refolding of the transmembrane protein (TM) and is thought to activate its fusogenic potential by unmasking its fusion peptide. Fusion occurs at the host cell plasma membrane (By similarity).</text>
</comment>
<comment type="function">
    <text evidence="1">The transmembrane protein (TM) acts as a class I viral fusion protein. Under the current model, the protein has at least 3 conformational states: pre-fusion native state, pre-hairpin intermediate state, and post-fusion hairpin state. During viral and target cell membrane fusion, the coiled coil regions (heptad repeats) assume a trimer-of-hairpins structure, positioning the fusion peptide in close proximity to the C-terminal region of the ectodomain. The formation of this structure appears to drive apposition and subsequent fusion of viral and target cell membranes. Membranes fusion leads to delivery of the nucleocapsid into the cytoplasm (By similarity).</text>
</comment>
<comment type="subunit">
    <text>The mature envelope protein (Env) consists of a trimer of SU-TM heterodimers attached by a labile interchain disulfide bond.</text>
</comment>
<comment type="subcellular location">
    <molecule>Transmembrane protein</molecule>
    <subcellularLocation>
        <location evidence="1">Virion membrane</location>
        <topology evidence="1">Single-pass type I membrane protein</topology>
    </subcellularLocation>
    <subcellularLocation>
        <location evidence="1">Host cell membrane</location>
        <topology evidence="1">Single-pass type I membrane protein</topology>
    </subcellularLocation>
    <text evidence="1">It is probably concentrated at the site of budding and incorporated into the virions possibly by contacts between the cytoplasmic tail of Env and the N-terminus of Gag.</text>
</comment>
<comment type="subcellular location">
    <molecule>Surface protein</molecule>
    <subcellularLocation>
        <location evidence="1">Virion membrane</location>
        <topology evidence="1">Peripheral membrane protein</topology>
    </subcellularLocation>
    <subcellularLocation>
        <location evidence="1">Host cell membrane</location>
        <topology evidence="1">Peripheral membrane protein</topology>
    </subcellularLocation>
    <text evidence="1">The surface protein is not anchored to the viral envelope, but associates with the extravirion surface through its binding to TM. It is probably concentrated at the site of budding and incorporated into the virions possibly by contacts between the cytoplasmic tail of Env and the N-terminus of Gag (By similarity).</text>
</comment>
<comment type="domain">
    <text evidence="1">The 17 amino acids long immunosuppressive region is present in many retroviral envelope proteins. Synthetic peptides derived from this relatively conserved sequence inhibit immune function in vitro and in vivo (By similarity).</text>
</comment>
<comment type="PTM">
    <text evidence="1">Specific enzymatic cleavages in vivo yield mature proteins. Envelope glycoproteins are synthesized as an inactive precursor that is N-glycosylated and processed likely by host cell furin or by a furin-like protease in the Golgi to yield the mature SU and TM proteins. The cleavage site between SU and TM requires the minimal sequence [KR]-X-[KR]-R (By similarity).</text>
</comment>
<comment type="PTM">
    <text>The CXXC motif is highly conserved across a broad range of retroviral envelope proteins. It is thought to participate in the formation of a labile disulfide bond possibly with the CX6CC motif present in the transmembrane protein. Isomerization of the intersubunit disulfide bond to an SU intrachain disulfide bond is thought to occur upon receptor recognition in order to allow membrane fusion.</text>
</comment>
<comment type="PTM">
    <text evidence="1">The transmembrane protein is palmitoylated.</text>
</comment>
<feature type="signal peptide" evidence="2">
    <location>
        <begin position="1"/>
        <end position="33"/>
    </location>
</feature>
<feature type="chain" id="PRO_0000239556" description="Envelope glycoprotein">
    <location>
        <begin position="34"/>
        <end position="515"/>
    </location>
</feature>
<feature type="chain" id="PRO_0000040699" description="Surface protein" evidence="1">
    <location>
        <begin position="34"/>
        <end position="301"/>
    </location>
</feature>
<feature type="chain" id="PRO_0000040700" description="Transmembrane protein" evidence="1">
    <location>
        <begin position="302"/>
        <end position="515"/>
    </location>
</feature>
<feature type="topological domain" description="Extracellular" evidence="2">
    <location>
        <begin position="34"/>
        <end position="436"/>
    </location>
</feature>
<feature type="transmembrane region" description="Helical" evidence="2">
    <location>
        <begin position="437"/>
        <end position="457"/>
    </location>
</feature>
<feature type="topological domain" description="Cytoplasmic" evidence="2">
    <location>
        <begin position="458"/>
        <end position="515"/>
    </location>
</feature>
<feature type="region of interest" description="Fusion peptide" evidence="2">
    <location>
        <begin position="304"/>
        <end position="324"/>
    </location>
</feature>
<feature type="region of interest" description="Immunosuppression" evidence="1">
    <location>
        <begin position="365"/>
        <end position="381"/>
    </location>
</feature>
<feature type="coiled-coil region" evidence="2">
    <location>
        <begin position="330"/>
        <end position="376"/>
    </location>
</feature>
<feature type="coiled-coil region" evidence="2">
    <location>
        <begin position="388"/>
        <end position="420"/>
    </location>
</feature>
<feature type="short sequence motif" description="CXXC">
    <location>
        <begin position="212"/>
        <end position="215"/>
    </location>
</feature>
<feature type="short sequence motif" description="CX6CC">
    <location>
        <begin position="384"/>
        <end position="392"/>
    </location>
</feature>
<feature type="site" description="Cleavage; by host" evidence="1">
    <location>
        <begin position="301"/>
        <end position="302"/>
    </location>
</feature>
<feature type="lipid moiety-binding region" description="S-palmitoyl cysteine; by host" evidence="1">
    <location>
        <position position="455"/>
    </location>
</feature>
<feature type="glycosylation site" description="N-linked (GlcNAc...) asparagine; by host" evidence="2">
    <location>
        <position position="129"/>
    </location>
</feature>
<feature type="glycosylation site" description="N-linked (GlcNAc...) asparagine; by host" evidence="2">
    <location>
        <position position="203"/>
    </location>
</feature>
<feature type="glycosylation site" description="N-linked (GlcNAc...) asparagine; by host" evidence="2">
    <location>
        <position position="230"/>
    </location>
</feature>
<feature type="glycosylation site" description="N-linked (GlcNAc...) asparagine; by host" evidence="2">
    <location>
        <position position="251"/>
    </location>
</feature>
<feature type="glycosylation site" description="N-linked (GlcNAc...) asparagine; by host" evidence="2">
    <location>
        <position position="256"/>
    </location>
</feature>
<feature type="glycosylation site" description="N-linked (GlcNAc...) asparagine; by host" evidence="2">
    <location>
        <position position="271"/>
    </location>
</feature>
<feature type="glycosylation site" description="N-linked (GlcNAc...) asparagine; by host" evidence="2">
    <location>
        <position position="287"/>
    </location>
</feature>
<feature type="glycosylation site" description="N-linked (GlcNAc...) asparagine; by host" evidence="2">
    <location>
        <position position="351"/>
    </location>
</feature>
<feature type="glycosylation site" description="N-linked (GlcNAc...) asparagine; by host" evidence="2">
    <location>
        <position position="398"/>
    </location>
</feature>
<feature type="disulfide bond" description="Interchain (between SU and TM chains, or C-215 with C-392); in linked form" evidence="1">
    <location>
        <begin position="212"/>
        <end position="392"/>
    </location>
</feature>
<feature type="disulfide bond" evidence="1">
    <location>
        <begin position="212"/>
        <end position="215"/>
    </location>
</feature>
<feature type="disulfide bond" evidence="1">
    <location>
        <begin position="384"/>
        <end position="391"/>
    </location>
</feature>
<protein>
    <recommendedName>
        <fullName>Envelope glycoprotein</fullName>
    </recommendedName>
    <alternativeName>
        <fullName>Env polyprotein</fullName>
    </alternativeName>
    <component>
        <recommendedName>
            <fullName>Surface protein</fullName>
            <shortName>SU</shortName>
        </recommendedName>
        <alternativeName>
            <fullName>Glycoprotein 51</fullName>
            <shortName>gp51</shortName>
        </alternativeName>
    </component>
    <component>
        <recommendedName>
            <fullName>Transmembrane protein</fullName>
            <shortName>TM</shortName>
        </recommendedName>
        <alternativeName>
            <fullName>Glycoprotein 30</fullName>
            <shortName>gp30</shortName>
        </alternativeName>
    </component>
</protein>
<dbReference type="EMBL" id="K02251">
    <property type="protein sequence ID" value="AAA42788.1"/>
    <property type="molecule type" value="Genomic_RNA"/>
</dbReference>
<dbReference type="PDB" id="2XZ3">
    <property type="method" value="X-ray"/>
    <property type="resolution" value="1.95 A"/>
    <property type="chains" value="A=326-418"/>
</dbReference>
<dbReference type="PDBsum" id="2XZ3"/>
<dbReference type="SMR" id="P51519"/>
<dbReference type="ELM" id="P51519"/>
<dbReference type="GlyCosmos" id="P51519">
    <property type="glycosylation" value="9 sites, No reported glycans"/>
</dbReference>
<dbReference type="OrthoDB" id="4817at10239"/>
<dbReference type="GO" id="GO:0020002">
    <property type="term" value="C:host cell plasma membrane"/>
    <property type="evidence" value="ECO:0007669"/>
    <property type="project" value="UniProtKB-SubCell"/>
</dbReference>
<dbReference type="GO" id="GO:0016020">
    <property type="term" value="C:membrane"/>
    <property type="evidence" value="ECO:0007669"/>
    <property type="project" value="UniProtKB-KW"/>
</dbReference>
<dbReference type="GO" id="GO:0019031">
    <property type="term" value="C:viral envelope"/>
    <property type="evidence" value="ECO:0007669"/>
    <property type="project" value="UniProtKB-KW"/>
</dbReference>
<dbReference type="GO" id="GO:0055036">
    <property type="term" value="C:virion membrane"/>
    <property type="evidence" value="ECO:0007669"/>
    <property type="project" value="UniProtKB-SubCell"/>
</dbReference>
<dbReference type="GO" id="GO:0019064">
    <property type="term" value="P:fusion of virus membrane with host plasma membrane"/>
    <property type="evidence" value="ECO:0007669"/>
    <property type="project" value="UniProtKB-KW"/>
</dbReference>
<dbReference type="GO" id="GO:0046718">
    <property type="term" value="P:symbiont entry into host cell"/>
    <property type="evidence" value="ECO:0007669"/>
    <property type="project" value="UniProtKB-KW"/>
</dbReference>
<dbReference type="GO" id="GO:0019062">
    <property type="term" value="P:virion attachment to host cell"/>
    <property type="evidence" value="ECO:0007669"/>
    <property type="project" value="UniProtKB-KW"/>
</dbReference>
<dbReference type="Gene3D" id="1.10.287.210">
    <property type="match status" value="1"/>
</dbReference>
<dbReference type="InterPro" id="IPR018154">
    <property type="entry name" value="TLV/ENV_coat_polyprotein"/>
</dbReference>
<dbReference type="PANTHER" id="PTHR10424:SF73">
    <property type="entry name" value="ENDOGENOUS RETROVIRUS GROUP FC1 ENV POLYPROTEIN-RELATED"/>
    <property type="match status" value="1"/>
</dbReference>
<dbReference type="PANTHER" id="PTHR10424">
    <property type="entry name" value="VIRAL ENVELOPE PROTEIN"/>
    <property type="match status" value="1"/>
</dbReference>
<dbReference type="Pfam" id="PF00429">
    <property type="entry name" value="TLV_coat"/>
    <property type="match status" value="1"/>
</dbReference>
<dbReference type="SUPFAM" id="SSF58069">
    <property type="entry name" value="Virus ectodomain"/>
    <property type="match status" value="1"/>
</dbReference>